<reference key="1">
    <citation type="journal article" date="2002" name="Mol. Microbiol.">
        <title>Genome sequence of Streptococcus agalactiae, a pathogen causing invasive neonatal disease.</title>
        <authorList>
            <person name="Glaser P."/>
            <person name="Rusniok C."/>
            <person name="Buchrieser C."/>
            <person name="Chevalier F."/>
            <person name="Frangeul L."/>
            <person name="Msadek T."/>
            <person name="Zouine M."/>
            <person name="Couve E."/>
            <person name="Lalioui L."/>
            <person name="Poyart C."/>
            <person name="Trieu-Cuot P."/>
            <person name="Kunst F."/>
        </authorList>
    </citation>
    <scope>NUCLEOTIDE SEQUENCE [LARGE SCALE GENOMIC DNA]</scope>
    <source>
        <strain>NEM316</strain>
    </source>
</reference>
<proteinExistence type="inferred from homology"/>
<sequence>MTKEIVTKAQERFEQSHQSLSREFAGIRAGRANASLLDRIQVEYYGAPTPLNQLASITVPEARVLLISPFDKSSIKDIERAINESDLGINPANDGSVIRLVIPALTEETRRDLAKEVKKVGENAKIAIRNIRRDAMDEAKKQEKNKEITEDDLKSLEKDIQKATDDAVKHIDEMTANKEKELLEV</sequence>
<dbReference type="EMBL" id="AL766852">
    <property type="protein sequence ID" value="CAD47230.1"/>
    <property type="molecule type" value="Genomic_DNA"/>
</dbReference>
<dbReference type="RefSeq" id="WP_000159519.1">
    <property type="nucleotide sequence ID" value="NC_004368.1"/>
</dbReference>
<dbReference type="SMR" id="P66740"/>
<dbReference type="GeneID" id="66886367"/>
<dbReference type="KEGG" id="san:frr"/>
<dbReference type="eggNOG" id="COG0233">
    <property type="taxonomic scope" value="Bacteria"/>
</dbReference>
<dbReference type="HOGENOM" id="CLU_073981_2_0_9"/>
<dbReference type="Proteomes" id="UP000000823">
    <property type="component" value="Chromosome"/>
</dbReference>
<dbReference type="GO" id="GO:0005737">
    <property type="term" value="C:cytoplasm"/>
    <property type="evidence" value="ECO:0007669"/>
    <property type="project" value="UniProtKB-SubCell"/>
</dbReference>
<dbReference type="GO" id="GO:0043023">
    <property type="term" value="F:ribosomal large subunit binding"/>
    <property type="evidence" value="ECO:0007669"/>
    <property type="project" value="TreeGrafter"/>
</dbReference>
<dbReference type="GO" id="GO:0006415">
    <property type="term" value="P:translational termination"/>
    <property type="evidence" value="ECO:0007669"/>
    <property type="project" value="UniProtKB-UniRule"/>
</dbReference>
<dbReference type="CDD" id="cd00520">
    <property type="entry name" value="RRF"/>
    <property type="match status" value="1"/>
</dbReference>
<dbReference type="FunFam" id="1.10.132.20:FF:000001">
    <property type="entry name" value="Ribosome-recycling factor"/>
    <property type="match status" value="1"/>
</dbReference>
<dbReference type="FunFam" id="3.30.1360.40:FF:000001">
    <property type="entry name" value="Ribosome-recycling factor"/>
    <property type="match status" value="1"/>
</dbReference>
<dbReference type="Gene3D" id="3.30.1360.40">
    <property type="match status" value="1"/>
</dbReference>
<dbReference type="Gene3D" id="1.10.132.20">
    <property type="entry name" value="Ribosome-recycling factor"/>
    <property type="match status" value="1"/>
</dbReference>
<dbReference type="HAMAP" id="MF_00040">
    <property type="entry name" value="RRF"/>
    <property type="match status" value="1"/>
</dbReference>
<dbReference type="InterPro" id="IPR002661">
    <property type="entry name" value="Ribosome_recyc_fac"/>
</dbReference>
<dbReference type="InterPro" id="IPR023584">
    <property type="entry name" value="Ribosome_recyc_fac_dom"/>
</dbReference>
<dbReference type="InterPro" id="IPR036191">
    <property type="entry name" value="RRF_sf"/>
</dbReference>
<dbReference type="NCBIfam" id="TIGR00496">
    <property type="entry name" value="frr"/>
    <property type="match status" value="1"/>
</dbReference>
<dbReference type="PANTHER" id="PTHR20982:SF3">
    <property type="entry name" value="MITOCHONDRIAL RIBOSOME RECYCLING FACTOR PSEUDO 1"/>
    <property type="match status" value="1"/>
</dbReference>
<dbReference type="PANTHER" id="PTHR20982">
    <property type="entry name" value="RIBOSOME RECYCLING FACTOR"/>
    <property type="match status" value="1"/>
</dbReference>
<dbReference type="Pfam" id="PF01765">
    <property type="entry name" value="RRF"/>
    <property type="match status" value="1"/>
</dbReference>
<dbReference type="SUPFAM" id="SSF55194">
    <property type="entry name" value="Ribosome recycling factor, RRF"/>
    <property type="match status" value="1"/>
</dbReference>
<organism>
    <name type="scientific">Streptococcus agalactiae serotype III (strain NEM316)</name>
    <dbReference type="NCBI Taxonomy" id="211110"/>
    <lineage>
        <taxon>Bacteria</taxon>
        <taxon>Bacillati</taxon>
        <taxon>Bacillota</taxon>
        <taxon>Bacilli</taxon>
        <taxon>Lactobacillales</taxon>
        <taxon>Streptococcaceae</taxon>
        <taxon>Streptococcus</taxon>
    </lineage>
</organism>
<comment type="function">
    <text evidence="1">Responsible for the release of ribosomes from messenger RNA at the termination of protein biosynthesis. May increase the efficiency of translation by recycling ribosomes from one round of translation to another.</text>
</comment>
<comment type="subcellular location">
    <subcellularLocation>
        <location evidence="1">Cytoplasm</location>
    </subcellularLocation>
</comment>
<comment type="similarity">
    <text evidence="1">Belongs to the RRF family.</text>
</comment>
<keyword id="KW-0963">Cytoplasm</keyword>
<keyword id="KW-0648">Protein biosynthesis</keyword>
<protein>
    <recommendedName>
        <fullName evidence="1">Ribosome-recycling factor</fullName>
        <shortName evidence="1">RRF</shortName>
    </recommendedName>
    <alternativeName>
        <fullName evidence="1">Ribosome-releasing factor</fullName>
    </alternativeName>
</protein>
<name>RRF_STRA3</name>
<evidence type="ECO:0000255" key="1">
    <source>
        <dbReference type="HAMAP-Rule" id="MF_00040"/>
    </source>
</evidence>
<gene>
    <name evidence="1" type="primary">frr</name>
    <name type="ordered locus">gbs1571</name>
</gene>
<feature type="chain" id="PRO_0000167547" description="Ribosome-recycling factor">
    <location>
        <begin position="1"/>
        <end position="185"/>
    </location>
</feature>
<accession>P66740</accession>
<accession>Q8DYG9</accession>
<accession>Q8E432</accession>